<sequence>MTGLLVAGTTSDAGKTAVTTGLCRALARRGVKVAPYKAQNMSNNSMVCTSVDGAGAEIGRAQWVQALAARATPEPAMNPVLLKPGSDRRSHVVLMGRPWGQVSSSDWLEGRRALATAAHEAFDELASRYEVVVAEGAGSPTEINLRAGDYVNLGLARHAGLPTVVVGDIDRGGVFAAFFGTVALLSPQDQALIAGFVVNKFRGDVDLLAPGLRDLERLTGRRVYGTLPWHPDIWLDSEDALELAGRRSAQSGARRVAVIRLPRISNFTDVDALGLEPDLDVVFASHPGSLADADLVVLPGTRATIADLAWLRSRGLDSALRRHVAAGRPVLGICGGFQMLGRVIRDPHGVEGPVAGVDGLGLLDVETTFGPDKVLRLPSGRWFGAPATGYEIHHGRITRGDGVDEFLDGARCGQVFGTMWHGALEGDELRSRFLQEALGVAPSGVSFPAAREARLDLLGDLVERHLDVDALLDLAKTGPVAGLPFLPPGAP</sequence>
<organism>
    <name type="scientific">Mycolicibacterium gilvum (strain PYR-GCK)</name>
    <name type="common">Mycobacterium gilvum (strain PYR-GCK)</name>
    <dbReference type="NCBI Taxonomy" id="350054"/>
    <lineage>
        <taxon>Bacteria</taxon>
        <taxon>Bacillati</taxon>
        <taxon>Actinomycetota</taxon>
        <taxon>Actinomycetes</taxon>
        <taxon>Mycobacteriales</taxon>
        <taxon>Mycobacteriaceae</taxon>
        <taxon>Mycolicibacterium</taxon>
    </lineage>
</organism>
<dbReference type="EMBL" id="CP000656">
    <property type="protein sequence ID" value="ABP42854.1"/>
    <property type="molecule type" value="Genomic_DNA"/>
</dbReference>
<dbReference type="SMR" id="A4T0R6"/>
<dbReference type="STRING" id="350054.Mflv_0360"/>
<dbReference type="KEGG" id="mgi:Mflv_0360"/>
<dbReference type="eggNOG" id="COG1492">
    <property type="taxonomic scope" value="Bacteria"/>
</dbReference>
<dbReference type="HOGENOM" id="CLU_019250_2_1_11"/>
<dbReference type="OrthoDB" id="9808302at2"/>
<dbReference type="UniPathway" id="UPA00148"/>
<dbReference type="GO" id="GO:0015420">
    <property type="term" value="F:ABC-type vitamin B12 transporter activity"/>
    <property type="evidence" value="ECO:0007669"/>
    <property type="project" value="UniProtKB-UniRule"/>
</dbReference>
<dbReference type="GO" id="GO:0003824">
    <property type="term" value="F:catalytic activity"/>
    <property type="evidence" value="ECO:0007669"/>
    <property type="project" value="InterPro"/>
</dbReference>
<dbReference type="GO" id="GO:0009236">
    <property type="term" value="P:cobalamin biosynthetic process"/>
    <property type="evidence" value="ECO:0007669"/>
    <property type="project" value="UniProtKB-UniRule"/>
</dbReference>
<dbReference type="CDD" id="cd05389">
    <property type="entry name" value="CobQ_N"/>
    <property type="match status" value="1"/>
</dbReference>
<dbReference type="CDD" id="cd01750">
    <property type="entry name" value="GATase1_CobQ"/>
    <property type="match status" value="1"/>
</dbReference>
<dbReference type="Gene3D" id="3.40.50.880">
    <property type="match status" value="1"/>
</dbReference>
<dbReference type="Gene3D" id="3.40.50.300">
    <property type="entry name" value="P-loop containing nucleotide triphosphate hydrolases"/>
    <property type="match status" value="1"/>
</dbReference>
<dbReference type="HAMAP" id="MF_00028">
    <property type="entry name" value="CobQ"/>
    <property type="match status" value="1"/>
</dbReference>
<dbReference type="InterPro" id="IPR029062">
    <property type="entry name" value="Class_I_gatase-like"/>
</dbReference>
<dbReference type="InterPro" id="IPR002586">
    <property type="entry name" value="CobQ/CobB/MinD/ParA_Nub-bd_dom"/>
</dbReference>
<dbReference type="InterPro" id="IPR033949">
    <property type="entry name" value="CobQ_GATase1"/>
</dbReference>
<dbReference type="InterPro" id="IPR047045">
    <property type="entry name" value="CobQ_N"/>
</dbReference>
<dbReference type="InterPro" id="IPR004459">
    <property type="entry name" value="CobQ_synth"/>
</dbReference>
<dbReference type="InterPro" id="IPR011698">
    <property type="entry name" value="GATase_3"/>
</dbReference>
<dbReference type="InterPro" id="IPR027417">
    <property type="entry name" value="P-loop_NTPase"/>
</dbReference>
<dbReference type="NCBIfam" id="TIGR00313">
    <property type="entry name" value="cobQ"/>
    <property type="match status" value="1"/>
</dbReference>
<dbReference type="NCBIfam" id="NF001989">
    <property type="entry name" value="PRK00784.1"/>
    <property type="match status" value="1"/>
</dbReference>
<dbReference type="PANTHER" id="PTHR21343:SF1">
    <property type="entry name" value="COBYRIC ACID SYNTHASE"/>
    <property type="match status" value="1"/>
</dbReference>
<dbReference type="PANTHER" id="PTHR21343">
    <property type="entry name" value="DETHIOBIOTIN SYNTHETASE"/>
    <property type="match status" value="1"/>
</dbReference>
<dbReference type="Pfam" id="PF01656">
    <property type="entry name" value="CbiA"/>
    <property type="match status" value="1"/>
</dbReference>
<dbReference type="Pfam" id="PF07685">
    <property type="entry name" value="GATase_3"/>
    <property type="match status" value="1"/>
</dbReference>
<dbReference type="SUPFAM" id="SSF52317">
    <property type="entry name" value="Class I glutamine amidotransferase-like"/>
    <property type="match status" value="1"/>
</dbReference>
<dbReference type="SUPFAM" id="SSF52540">
    <property type="entry name" value="P-loop containing nucleoside triphosphate hydrolases"/>
    <property type="match status" value="1"/>
</dbReference>
<dbReference type="PROSITE" id="PS51274">
    <property type="entry name" value="GATASE_COBBQ"/>
    <property type="match status" value="1"/>
</dbReference>
<accession>A4T0R6</accession>
<gene>
    <name evidence="1" type="primary">cobQ</name>
    <name type="ordered locus">Mflv_0360</name>
</gene>
<evidence type="ECO:0000255" key="1">
    <source>
        <dbReference type="HAMAP-Rule" id="MF_00028"/>
    </source>
</evidence>
<feature type="chain" id="PRO_0000332349" description="Cobyric acid synthase">
    <location>
        <begin position="1"/>
        <end position="491"/>
    </location>
</feature>
<feature type="domain" description="GATase cobBQ-type" evidence="1">
    <location>
        <begin position="253"/>
        <end position="429"/>
    </location>
</feature>
<feature type="active site" description="Nucleophile" evidence="1">
    <location>
        <position position="334"/>
    </location>
</feature>
<feature type="active site" evidence="1">
    <location>
        <position position="421"/>
    </location>
</feature>
<protein>
    <recommendedName>
        <fullName evidence="1">Cobyric acid synthase</fullName>
    </recommendedName>
</protein>
<name>COBQ_MYCGI</name>
<reference key="1">
    <citation type="submission" date="2007-04" db="EMBL/GenBank/DDBJ databases">
        <title>Complete sequence of chromosome of Mycobacterium gilvum PYR-GCK.</title>
        <authorList>
            <consortium name="US DOE Joint Genome Institute"/>
            <person name="Copeland A."/>
            <person name="Lucas S."/>
            <person name="Lapidus A."/>
            <person name="Barry K."/>
            <person name="Detter J.C."/>
            <person name="Glavina del Rio T."/>
            <person name="Hammon N."/>
            <person name="Israni S."/>
            <person name="Dalin E."/>
            <person name="Tice H."/>
            <person name="Pitluck S."/>
            <person name="Chain P."/>
            <person name="Malfatti S."/>
            <person name="Shin M."/>
            <person name="Vergez L."/>
            <person name="Schmutz J."/>
            <person name="Larimer F."/>
            <person name="Land M."/>
            <person name="Hauser L."/>
            <person name="Kyrpides N."/>
            <person name="Mikhailova N."/>
            <person name="Miller C."/>
            <person name="Richardson P."/>
        </authorList>
    </citation>
    <scope>NUCLEOTIDE SEQUENCE [LARGE SCALE GENOMIC DNA]</scope>
    <source>
        <strain>PYR-GCK</strain>
    </source>
</reference>
<comment type="function">
    <text evidence="1">Catalyzes amidations at positions B, D, E, and G on adenosylcobyrinic A,C-diamide. NH(2) groups are provided by glutamine, and one molecule of ATP is hydrogenolyzed for each amidation.</text>
</comment>
<comment type="pathway">
    <text evidence="1">Cofactor biosynthesis; adenosylcobalamin biosynthesis.</text>
</comment>
<comment type="similarity">
    <text evidence="1">Belongs to the CobB/CobQ family. CobQ subfamily.</text>
</comment>
<keyword id="KW-0169">Cobalamin biosynthesis</keyword>
<keyword id="KW-0315">Glutamine amidotransferase</keyword>
<proteinExistence type="inferred from homology"/>